<reference key="1">
    <citation type="journal article" date="2009" name="PLoS Genet.">
        <title>Organised genome dynamics in the Escherichia coli species results in highly diverse adaptive paths.</title>
        <authorList>
            <person name="Touchon M."/>
            <person name="Hoede C."/>
            <person name="Tenaillon O."/>
            <person name="Barbe V."/>
            <person name="Baeriswyl S."/>
            <person name="Bidet P."/>
            <person name="Bingen E."/>
            <person name="Bonacorsi S."/>
            <person name="Bouchier C."/>
            <person name="Bouvet O."/>
            <person name="Calteau A."/>
            <person name="Chiapello H."/>
            <person name="Clermont O."/>
            <person name="Cruveiller S."/>
            <person name="Danchin A."/>
            <person name="Diard M."/>
            <person name="Dossat C."/>
            <person name="Karoui M.E."/>
            <person name="Frapy E."/>
            <person name="Garry L."/>
            <person name="Ghigo J.M."/>
            <person name="Gilles A.M."/>
            <person name="Johnson J."/>
            <person name="Le Bouguenec C."/>
            <person name="Lescat M."/>
            <person name="Mangenot S."/>
            <person name="Martinez-Jehanne V."/>
            <person name="Matic I."/>
            <person name="Nassif X."/>
            <person name="Oztas S."/>
            <person name="Petit M.A."/>
            <person name="Pichon C."/>
            <person name="Rouy Z."/>
            <person name="Ruf C.S."/>
            <person name="Schneider D."/>
            <person name="Tourret J."/>
            <person name="Vacherie B."/>
            <person name="Vallenet D."/>
            <person name="Medigue C."/>
            <person name="Rocha E.P.C."/>
            <person name="Denamur E."/>
        </authorList>
    </citation>
    <scope>NUCLEOTIDE SEQUENCE [LARGE SCALE GENOMIC DNA]</scope>
    <source>
        <strain>UMN026 / ExPEC</strain>
    </source>
</reference>
<proteinExistence type="inferred from homology"/>
<comment type="function">
    <text evidence="1">Produces ATP from ADP in the presence of a proton gradient across the membrane. The gamma chain is believed to be important in regulating ATPase activity and the flow of protons through the CF(0) complex.</text>
</comment>
<comment type="subunit">
    <text evidence="1">F-type ATPases have 2 components, CF(1) - the catalytic core - and CF(0) - the membrane proton channel. CF(1) has five subunits: alpha(3), beta(3), gamma(1), delta(1), epsilon(1). CF(0) has three main subunits: a, b and c.</text>
</comment>
<comment type="subcellular location">
    <subcellularLocation>
        <location evidence="1">Cell inner membrane</location>
        <topology evidence="1">Peripheral membrane protein</topology>
    </subcellularLocation>
</comment>
<comment type="similarity">
    <text evidence="1">Belongs to the ATPase gamma chain family.</text>
</comment>
<gene>
    <name evidence="1" type="primary">atpG</name>
    <name type="ordered locus">ECUMN_4263</name>
</gene>
<feature type="chain" id="PRO_1000134147" description="ATP synthase gamma chain">
    <location>
        <begin position="1"/>
        <end position="287"/>
    </location>
</feature>
<keyword id="KW-0066">ATP synthesis</keyword>
<keyword id="KW-0997">Cell inner membrane</keyword>
<keyword id="KW-1003">Cell membrane</keyword>
<keyword id="KW-0139">CF(1)</keyword>
<keyword id="KW-0375">Hydrogen ion transport</keyword>
<keyword id="KW-0406">Ion transport</keyword>
<keyword id="KW-0472">Membrane</keyword>
<keyword id="KW-0813">Transport</keyword>
<dbReference type="EMBL" id="CU928163">
    <property type="protein sequence ID" value="CAR15403.1"/>
    <property type="molecule type" value="Genomic_DNA"/>
</dbReference>
<dbReference type="RefSeq" id="WP_000896498.1">
    <property type="nucleotide sequence ID" value="NC_011751.1"/>
</dbReference>
<dbReference type="RefSeq" id="YP_002414898.1">
    <property type="nucleotide sequence ID" value="NC_011751.1"/>
</dbReference>
<dbReference type="SMR" id="B7NF49"/>
<dbReference type="STRING" id="585056.ECUMN_4263"/>
<dbReference type="GeneID" id="93778234"/>
<dbReference type="KEGG" id="eum:ECUMN_4263"/>
<dbReference type="PATRIC" id="fig|585056.7.peg.4434"/>
<dbReference type="HOGENOM" id="CLU_050669_0_1_6"/>
<dbReference type="Proteomes" id="UP000007097">
    <property type="component" value="Chromosome"/>
</dbReference>
<dbReference type="GO" id="GO:0005886">
    <property type="term" value="C:plasma membrane"/>
    <property type="evidence" value="ECO:0007669"/>
    <property type="project" value="UniProtKB-SubCell"/>
</dbReference>
<dbReference type="GO" id="GO:0045259">
    <property type="term" value="C:proton-transporting ATP synthase complex"/>
    <property type="evidence" value="ECO:0007669"/>
    <property type="project" value="UniProtKB-KW"/>
</dbReference>
<dbReference type="GO" id="GO:0005524">
    <property type="term" value="F:ATP binding"/>
    <property type="evidence" value="ECO:0007669"/>
    <property type="project" value="UniProtKB-UniRule"/>
</dbReference>
<dbReference type="GO" id="GO:0046933">
    <property type="term" value="F:proton-transporting ATP synthase activity, rotational mechanism"/>
    <property type="evidence" value="ECO:0007669"/>
    <property type="project" value="UniProtKB-UniRule"/>
</dbReference>
<dbReference type="GO" id="GO:0042777">
    <property type="term" value="P:proton motive force-driven plasma membrane ATP synthesis"/>
    <property type="evidence" value="ECO:0007669"/>
    <property type="project" value="UniProtKB-UniRule"/>
</dbReference>
<dbReference type="CDD" id="cd12151">
    <property type="entry name" value="F1-ATPase_gamma"/>
    <property type="match status" value="1"/>
</dbReference>
<dbReference type="FunFam" id="1.10.287.80:FF:000005">
    <property type="entry name" value="ATP synthase gamma chain"/>
    <property type="match status" value="2"/>
</dbReference>
<dbReference type="FunFam" id="3.40.1380.10:FF:000001">
    <property type="entry name" value="ATP synthase gamma chain"/>
    <property type="match status" value="1"/>
</dbReference>
<dbReference type="Gene3D" id="3.40.1380.10">
    <property type="match status" value="1"/>
</dbReference>
<dbReference type="Gene3D" id="1.10.287.80">
    <property type="entry name" value="ATP synthase, gamma subunit, helix hairpin domain"/>
    <property type="match status" value="1"/>
</dbReference>
<dbReference type="HAMAP" id="MF_00815">
    <property type="entry name" value="ATP_synth_gamma_bact"/>
    <property type="match status" value="1"/>
</dbReference>
<dbReference type="InterPro" id="IPR035968">
    <property type="entry name" value="ATP_synth_F1_ATPase_gsu"/>
</dbReference>
<dbReference type="InterPro" id="IPR000131">
    <property type="entry name" value="ATP_synth_F1_gsu"/>
</dbReference>
<dbReference type="InterPro" id="IPR023632">
    <property type="entry name" value="ATP_synth_F1_gsu_CS"/>
</dbReference>
<dbReference type="NCBIfam" id="TIGR01146">
    <property type="entry name" value="ATPsyn_F1gamma"/>
    <property type="match status" value="1"/>
</dbReference>
<dbReference type="NCBIfam" id="NF004144">
    <property type="entry name" value="PRK05621.1-1"/>
    <property type="match status" value="1"/>
</dbReference>
<dbReference type="PANTHER" id="PTHR11693">
    <property type="entry name" value="ATP SYNTHASE GAMMA CHAIN"/>
    <property type="match status" value="1"/>
</dbReference>
<dbReference type="PANTHER" id="PTHR11693:SF22">
    <property type="entry name" value="ATP SYNTHASE SUBUNIT GAMMA, MITOCHONDRIAL"/>
    <property type="match status" value="1"/>
</dbReference>
<dbReference type="Pfam" id="PF00231">
    <property type="entry name" value="ATP-synt"/>
    <property type="match status" value="1"/>
</dbReference>
<dbReference type="PRINTS" id="PR00126">
    <property type="entry name" value="ATPASEGAMMA"/>
</dbReference>
<dbReference type="SUPFAM" id="SSF52943">
    <property type="entry name" value="ATP synthase (F1-ATPase), gamma subunit"/>
    <property type="match status" value="1"/>
</dbReference>
<dbReference type="PROSITE" id="PS00153">
    <property type="entry name" value="ATPASE_GAMMA"/>
    <property type="match status" value="1"/>
</dbReference>
<sequence>MAGAKEIRSKIASVQNTQKITKAMEMVAASKMRKSQDRMAASRPYAETMRKVIGHLAHGNLEYKHPYLEDRDVKRVGYLVVSTDRGLCGGLNINLFKKLLAEMKTWTDKGVQCDLAMIGSKGVSFFNSVGGNVVAQVTGMGDNPSLSELIGPVKVMLQAYDEGRLDKLYIVSNKFINTMSQVPTISQLLPLPASDDDDLKHKSWDYLYEPDPKALLDTLLRRYVESQVYQGVVENLASEQAARMVAMKAATDNGGSLIKELQLVYNKARQASITQELTEIVSGAAAV</sequence>
<protein>
    <recommendedName>
        <fullName evidence="1">ATP synthase gamma chain</fullName>
    </recommendedName>
    <alternativeName>
        <fullName evidence="1">ATP synthase F1 sector gamma subunit</fullName>
    </alternativeName>
    <alternativeName>
        <fullName evidence="1">F-ATPase gamma subunit</fullName>
    </alternativeName>
</protein>
<evidence type="ECO:0000255" key="1">
    <source>
        <dbReference type="HAMAP-Rule" id="MF_00815"/>
    </source>
</evidence>
<name>ATPG_ECOLU</name>
<accession>B7NF49</accession>
<organism>
    <name type="scientific">Escherichia coli O17:K52:H18 (strain UMN026 / ExPEC)</name>
    <dbReference type="NCBI Taxonomy" id="585056"/>
    <lineage>
        <taxon>Bacteria</taxon>
        <taxon>Pseudomonadati</taxon>
        <taxon>Pseudomonadota</taxon>
        <taxon>Gammaproteobacteria</taxon>
        <taxon>Enterobacterales</taxon>
        <taxon>Enterobacteriaceae</taxon>
        <taxon>Escherichia</taxon>
    </lineage>
</organism>